<feature type="chain" id="PRO_0000356745" description="Large ribosomal subunit protein bL33B">
    <location>
        <begin position="1"/>
        <end position="48"/>
    </location>
</feature>
<comment type="similarity">
    <text evidence="1">Belongs to the bacterial ribosomal protein bL33 family.</text>
</comment>
<proteinExistence type="inferred from homology"/>
<protein>
    <recommendedName>
        <fullName evidence="1">Large ribosomal subunit protein bL33B</fullName>
    </recommendedName>
    <alternativeName>
        <fullName evidence="1">50S ribosomal protein L33 2</fullName>
    </alternativeName>
</protein>
<sequence length="48" mass="5571">MRVKINLKCSECGSLNYLTSKNKQNHPEKIQVPKFCPKDRKVTLHVES</sequence>
<name>RL332_STRTD</name>
<dbReference type="EMBL" id="CP000419">
    <property type="protein sequence ID" value="ABJ65931.1"/>
    <property type="molecule type" value="Genomic_DNA"/>
</dbReference>
<dbReference type="SMR" id="Q03LJ1"/>
<dbReference type="KEGG" id="ste:STER_0672"/>
<dbReference type="HOGENOM" id="CLU_190949_0_2_9"/>
<dbReference type="GO" id="GO:0005737">
    <property type="term" value="C:cytoplasm"/>
    <property type="evidence" value="ECO:0007669"/>
    <property type="project" value="UniProtKB-ARBA"/>
</dbReference>
<dbReference type="GO" id="GO:1990904">
    <property type="term" value="C:ribonucleoprotein complex"/>
    <property type="evidence" value="ECO:0007669"/>
    <property type="project" value="UniProtKB-KW"/>
</dbReference>
<dbReference type="GO" id="GO:0005840">
    <property type="term" value="C:ribosome"/>
    <property type="evidence" value="ECO:0007669"/>
    <property type="project" value="UniProtKB-KW"/>
</dbReference>
<dbReference type="GO" id="GO:0003735">
    <property type="term" value="F:structural constituent of ribosome"/>
    <property type="evidence" value="ECO:0007669"/>
    <property type="project" value="InterPro"/>
</dbReference>
<dbReference type="GO" id="GO:0006412">
    <property type="term" value="P:translation"/>
    <property type="evidence" value="ECO:0007669"/>
    <property type="project" value="UniProtKB-UniRule"/>
</dbReference>
<dbReference type="Gene3D" id="2.20.28.120">
    <property type="entry name" value="Ribosomal protein L33"/>
    <property type="match status" value="1"/>
</dbReference>
<dbReference type="HAMAP" id="MF_00294">
    <property type="entry name" value="Ribosomal_bL33"/>
    <property type="match status" value="1"/>
</dbReference>
<dbReference type="InterPro" id="IPR001705">
    <property type="entry name" value="Ribosomal_bL33"/>
</dbReference>
<dbReference type="InterPro" id="IPR018264">
    <property type="entry name" value="Ribosomal_bL33_CS"/>
</dbReference>
<dbReference type="InterPro" id="IPR038584">
    <property type="entry name" value="Ribosomal_bL33_sf"/>
</dbReference>
<dbReference type="InterPro" id="IPR011332">
    <property type="entry name" value="Ribosomal_zn-bd"/>
</dbReference>
<dbReference type="NCBIfam" id="NF001764">
    <property type="entry name" value="PRK00504.1"/>
    <property type="match status" value="1"/>
</dbReference>
<dbReference type="NCBIfam" id="NF001860">
    <property type="entry name" value="PRK00595.1"/>
    <property type="match status" value="1"/>
</dbReference>
<dbReference type="NCBIfam" id="TIGR01023">
    <property type="entry name" value="rpmG_bact"/>
    <property type="match status" value="1"/>
</dbReference>
<dbReference type="PANTHER" id="PTHR43168">
    <property type="entry name" value="50S RIBOSOMAL PROTEIN L33, CHLOROPLASTIC"/>
    <property type="match status" value="1"/>
</dbReference>
<dbReference type="PANTHER" id="PTHR43168:SF6">
    <property type="entry name" value="LARGE RIBOSOMAL SUBUNIT PROTEIN BL33A"/>
    <property type="match status" value="1"/>
</dbReference>
<dbReference type="Pfam" id="PF00471">
    <property type="entry name" value="Ribosomal_L33"/>
    <property type="match status" value="1"/>
</dbReference>
<dbReference type="SUPFAM" id="SSF57829">
    <property type="entry name" value="Zn-binding ribosomal proteins"/>
    <property type="match status" value="1"/>
</dbReference>
<dbReference type="PROSITE" id="PS00582">
    <property type="entry name" value="RIBOSOMAL_L33"/>
    <property type="match status" value="1"/>
</dbReference>
<gene>
    <name evidence="1" type="primary">rpmG2</name>
    <name type="ordered locus">STER_0672</name>
</gene>
<reference key="1">
    <citation type="journal article" date="2006" name="Proc. Natl. Acad. Sci. U.S.A.">
        <title>Comparative genomics of the lactic acid bacteria.</title>
        <authorList>
            <person name="Makarova K.S."/>
            <person name="Slesarev A."/>
            <person name="Wolf Y.I."/>
            <person name="Sorokin A."/>
            <person name="Mirkin B."/>
            <person name="Koonin E.V."/>
            <person name="Pavlov A."/>
            <person name="Pavlova N."/>
            <person name="Karamychev V."/>
            <person name="Polouchine N."/>
            <person name="Shakhova V."/>
            <person name="Grigoriev I."/>
            <person name="Lou Y."/>
            <person name="Rohksar D."/>
            <person name="Lucas S."/>
            <person name="Huang K."/>
            <person name="Goodstein D.M."/>
            <person name="Hawkins T."/>
            <person name="Plengvidhya V."/>
            <person name="Welker D."/>
            <person name="Hughes J."/>
            <person name="Goh Y."/>
            <person name="Benson A."/>
            <person name="Baldwin K."/>
            <person name="Lee J.-H."/>
            <person name="Diaz-Muniz I."/>
            <person name="Dosti B."/>
            <person name="Smeianov V."/>
            <person name="Wechter W."/>
            <person name="Barabote R."/>
            <person name="Lorca G."/>
            <person name="Altermann E."/>
            <person name="Barrangou R."/>
            <person name="Ganesan B."/>
            <person name="Xie Y."/>
            <person name="Rawsthorne H."/>
            <person name="Tamir D."/>
            <person name="Parker C."/>
            <person name="Breidt F."/>
            <person name="Broadbent J.R."/>
            <person name="Hutkins R."/>
            <person name="O'Sullivan D."/>
            <person name="Steele J."/>
            <person name="Unlu G."/>
            <person name="Saier M.H. Jr."/>
            <person name="Klaenhammer T."/>
            <person name="Richardson P."/>
            <person name="Kozyavkin S."/>
            <person name="Weimer B.C."/>
            <person name="Mills D.A."/>
        </authorList>
    </citation>
    <scope>NUCLEOTIDE SEQUENCE [LARGE SCALE GENOMIC DNA]</scope>
    <source>
        <strain>ATCC BAA-491 / LMD-9</strain>
    </source>
</reference>
<accession>Q03LJ1</accession>
<evidence type="ECO:0000255" key="1">
    <source>
        <dbReference type="HAMAP-Rule" id="MF_00294"/>
    </source>
</evidence>
<organism>
    <name type="scientific">Streptococcus thermophilus (strain ATCC BAA-491 / LMD-9)</name>
    <dbReference type="NCBI Taxonomy" id="322159"/>
    <lineage>
        <taxon>Bacteria</taxon>
        <taxon>Bacillati</taxon>
        <taxon>Bacillota</taxon>
        <taxon>Bacilli</taxon>
        <taxon>Lactobacillales</taxon>
        <taxon>Streptococcaceae</taxon>
        <taxon>Streptococcus</taxon>
    </lineage>
</organism>
<keyword id="KW-0687">Ribonucleoprotein</keyword>
<keyword id="KW-0689">Ribosomal protein</keyword>